<dbReference type="EC" id="5.4.3.8" evidence="1"/>
<dbReference type="EMBL" id="AM849034">
    <property type="protein sequence ID" value="CAQ02909.1"/>
    <property type="molecule type" value="Genomic_DNA"/>
</dbReference>
<dbReference type="RefSeq" id="WP_012300066.1">
    <property type="nucleotide sequence ID" value="NZ_MZMN01000003.1"/>
</dbReference>
<dbReference type="SMR" id="B0RBL3"/>
<dbReference type="STRING" id="31964.CMS2838"/>
<dbReference type="KEGG" id="cms:CMS2838"/>
<dbReference type="eggNOG" id="COG0001">
    <property type="taxonomic scope" value="Bacteria"/>
</dbReference>
<dbReference type="HOGENOM" id="CLU_016922_1_5_11"/>
<dbReference type="OrthoDB" id="9801052at2"/>
<dbReference type="UniPathway" id="UPA00251">
    <property type="reaction ID" value="UER00317"/>
</dbReference>
<dbReference type="Proteomes" id="UP000001318">
    <property type="component" value="Chromosome"/>
</dbReference>
<dbReference type="GO" id="GO:0005737">
    <property type="term" value="C:cytoplasm"/>
    <property type="evidence" value="ECO:0007669"/>
    <property type="project" value="UniProtKB-SubCell"/>
</dbReference>
<dbReference type="GO" id="GO:0042286">
    <property type="term" value="F:glutamate-1-semialdehyde 2,1-aminomutase activity"/>
    <property type="evidence" value="ECO:0007669"/>
    <property type="project" value="UniProtKB-UniRule"/>
</dbReference>
<dbReference type="GO" id="GO:0030170">
    <property type="term" value="F:pyridoxal phosphate binding"/>
    <property type="evidence" value="ECO:0007669"/>
    <property type="project" value="InterPro"/>
</dbReference>
<dbReference type="GO" id="GO:0008483">
    <property type="term" value="F:transaminase activity"/>
    <property type="evidence" value="ECO:0007669"/>
    <property type="project" value="InterPro"/>
</dbReference>
<dbReference type="GO" id="GO:0006782">
    <property type="term" value="P:protoporphyrinogen IX biosynthetic process"/>
    <property type="evidence" value="ECO:0007669"/>
    <property type="project" value="UniProtKB-UniRule"/>
</dbReference>
<dbReference type="CDD" id="cd00610">
    <property type="entry name" value="OAT_like"/>
    <property type="match status" value="1"/>
</dbReference>
<dbReference type="FunFam" id="3.40.640.10:FF:000021">
    <property type="entry name" value="Glutamate-1-semialdehyde 2,1-aminomutase"/>
    <property type="match status" value="1"/>
</dbReference>
<dbReference type="Gene3D" id="3.90.1150.10">
    <property type="entry name" value="Aspartate Aminotransferase, domain 1"/>
    <property type="match status" value="1"/>
</dbReference>
<dbReference type="Gene3D" id="3.40.640.10">
    <property type="entry name" value="Type I PLP-dependent aspartate aminotransferase-like (Major domain)"/>
    <property type="match status" value="1"/>
</dbReference>
<dbReference type="HAMAP" id="MF_00375">
    <property type="entry name" value="HemL_aminotrans_3"/>
    <property type="match status" value="1"/>
</dbReference>
<dbReference type="InterPro" id="IPR004639">
    <property type="entry name" value="4pyrrol_synth_GluAld_NH2Trfase"/>
</dbReference>
<dbReference type="InterPro" id="IPR005814">
    <property type="entry name" value="Aminotrans_3"/>
</dbReference>
<dbReference type="InterPro" id="IPR015424">
    <property type="entry name" value="PyrdxlP-dep_Trfase"/>
</dbReference>
<dbReference type="InterPro" id="IPR015421">
    <property type="entry name" value="PyrdxlP-dep_Trfase_major"/>
</dbReference>
<dbReference type="InterPro" id="IPR015422">
    <property type="entry name" value="PyrdxlP-dep_Trfase_small"/>
</dbReference>
<dbReference type="NCBIfam" id="NF000818">
    <property type="entry name" value="PRK00062.1"/>
    <property type="match status" value="1"/>
</dbReference>
<dbReference type="PANTHER" id="PTHR43713">
    <property type="entry name" value="GLUTAMATE-1-SEMIALDEHYDE 2,1-AMINOMUTASE"/>
    <property type="match status" value="1"/>
</dbReference>
<dbReference type="PANTHER" id="PTHR43713:SF3">
    <property type="entry name" value="GLUTAMATE-1-SEMIALDEHYDE 2,1-AMINOMUTASE 1, CHLOROPLASTIC-RELATED"/>
    <property type="match status" value="1"/>
</dbReference>
<dbReference type="Pfam" id="PF00202">
    <property type="entry name" value="Aminotran_3"/>
    <property type="match status" value="1"/>
</dbReference>
<dbReference type="SUPFAM" id="SSF53383">
    <property type="entry name" value="PLP-dependent transferases"/>
    <property type="match status" value="1"/>
</dbReference>
<gene>
    <name evidence="1" type="primary">hemL</name>
    <name type="ordered locus">CMS2838</name>
</gene>
<sequence>MTHSQDLFDRARDVIPGGVNSPVRAFGSVGGTPRMMVRAAGPYVTDADGVEYVDLVNSWGPAILGHARPEVVKAVQDAAALGLGFGATTPAETELAELVTERVRVAGVDGSPDRRPVEKLRLVSTGTEATMTAIRLARGFTGRDLLVKFAGHYHGHSDSLLAEAGSGVATLALPGSAGIPEAIAAQTIVVPYNDLGAVRAVFAEHGPRIAAVITEAAAANMGVVPPLPGFTAELARIAHDNGSLLISDEVLTGFRVHPAGYWGLDNDGLAADHPDAWTPDLVTYGKVIGGGLPVAALGGRADVMDHLAPLGPVYQAGTLSGNPVAVAAGLTTLRLADADVYRALDIAADILIYAVELAFDRAGLAYSVQRAGSLFSFTFGTPPEHGITDYATVQAQETWRYPAFFHSMLDQGVSLPPSVFEAWFVSAAMDEASLDRVIRALPAAARAAAAATPPA</sequence>
<protein>
    <recommendedName>
        <fullName evidence="1">Glutamate-1-semialdehyde 2,1-aminomutase</fullName>
        <shortName evidence="1">GSA</shortName>
        <ecNumber evidence="1">5.4.3.8</ecNumber>
    </recommendedName>
    <alternativeName>
        <fullName evidence="1">Glutamate-1-semialdehyde aminotransferase</fullName>
        <shortName evidence="1">GSA-AT</shortName>
    </alternativeName>
</protein>
<reference key="1">
    <citation type="journal article" date="2008" name="J. Bacteriol.">
        <title>Genome of the actinomycete plant pathogen Clavibacter michiganensis subsp. sepedonicus suggests recent niche adaptation.</title>
        <authorList>
            <person name="Bentley S.D."/>
            <person name="Corton C."/>
            <person name="Brown S.E."/>
            <person name="Barron A."/>
            <person name="Clark L."/>
            <person name="Doggett J."/>
            <person name="Harris B."/>
            <person name="Ormond D."/>
            <person name="Quail M.A."/>
            <person name="May G."/>
            <person name="Francis D."/>
            <person name="Knudson D."/>
            <person name="Parkhill J."/>
            <person name="Ishimaru C.A."/>
        </authorList>
    </citation>
    <scope>NUCLEOTIDE SEQUENCE [LARGE SCALE GENOMIC DNA]</scope>
    <source>
        <strain>ATCC 33113 / DSM 20744 / JCM 9667 / LMG 2889 / ICMP 2535 / C-1</strain>
    </source>
</reference>
<proteinExistence type="inferred from homology"/>
<keyword id="KW-0963">Cytoplasm</keyword>
<keyword id="KW-0413">Isomerase</keyword>
<keyword id="KW-0627">Porphyrin biosynthesis</keyword>
<keyword id="KW-0663">Pyridoxal phosphate</keyword>
<accession>B0RBL3</accession>
<comment type="catalytic activity">
    <reaction evidence="1">
        <text>(S)-4-amino-5-oxopentanoate = 5-aminolevulinate</text>
        <dbReference type="Rhea" id="RHEA:14265"/>
        <dbReference type="ChEBI" id="CHEBI:57501"/>
        <dbReference type="ChEBI" id="CHEBI:356416"/>
        <dbReference type="EC" id="5.4.3.8"/>
    </reaction>
</comment>
<comment type="cofactor">
    <cofactor evidence="1">
        <name>pyridoxal 5'-phosphate</name>
        <dbReference type="ChEBI" id="CHEBI:597326"/>
    </cofactor>
</comment>
<comment type="pathway">
    <text evidence="1">Porphyrin-containing compound metabolism; protoporphyrin-IX biosynthesis; 5-aminolevulinate from L-glutamyl-tRNA(Glu): step 2/2.</text>
</comment>
<comment type="subunit">
    <text evidence="1">Homodimer.</text>
</comment>
<comment type="subcellular location">
    <subcellularLocation>
        <location evidence="1">Cytoplasm</location>
    </subcellularLocation>
</comment>
<comment type="similarity">
    <text evidence="1">Belongs to the class-III pyridoxal-phosphate-dependent aminotransferase family. HemL subfamily.</text>
</comment>
<name>GSA_CLASE</name>
<organism>
    <name type="scientific">Clavibacter sepedonicus</name>
    <name type="common">Clavibacter michiganensis subsp. sepedonicus</name>
    <dbReference type="NCBI Taxonomy" id="31964"/>
    <lineage>
        <taxon>Bacteria</taxon>
        <taxon>Bacillati</taxon>
        <taxon>Actinomycetota</taxon>
        <taxon>Actinomycetes</taxon>
        <taxon>Micrococcales</taxon>
        <taxon>Microbacteriaceae</taxon>
        <taxon>Clavibacter</taxon>
    </lineage>
</organism>
<feature type="chain" id="PRO_1000079916" description="Glutamate-1-semialdehyde 2,1-aminomutase">
    <location>
        <begin position="1"/>
        <end position="455"/>
    </location>
</feature>
<feature type="modified residue" description="N6-(pyridoxal phosphate)lysine" evidence="1">
    <location>
        <position position="286"/>
    </location>
</feature>
<evidence type="ECO:0000255" key="1">
    <source>
        <dbReference type="HAMAP-Rule" id="MF_00375"/>
    </source>
</evidence>